<reference key="1">
    <citation type="journal article" date="1996" name="Biochem. Biophys. Res. Commun.">
        <title>Cloning of the RhoB gene from the mouse genome and characterization of its promoter region.</title>
        <authorList>
            <person name="Nakamura T."/>
            <person name="Asano M."/>
            <person name="Shindo-Okada N."/>
            <person name="Nishimura S."/>
            <person name="Monden Y."/>
        </authorList>
    </citation>
    <scope>NUCLEOTIDE SEQUENCE [GENOMIC DNA]</scope>
</reference>
<reference key="2">
    <citation type="journal article" date="2005" name="Oncogene">
        <title>RhoB mRNA is stabilized by HuR after UV light.</title>
        <authorList>
            <person name="Westmark C.J."/>
            <person name="Bartleson V.B."/>
            <person name="Malter J.S."/>
        </authorList>
    </citation>
    <scope>NUCLEOTIDE SEQUENCE [MRNA]</scope>
    <source>
        <strain>C57BL/6J</strain>
        <tissue>Hippocampus</tissue>
    </source>
</reference>
<reference key="3">
    <citation type="journal article" date="2004" name="Genome Res.">
        <title>The status, quality, and expansion of the NIH full-length cDNA project: the Mammalian Gene Collection (MGC).</title>
        <authorList>
            <consortium name="The MGC Project Team"/>
        </authorList>
    </citation>
    <scope>NUCLEOTIDE SEQUENCE [LARGE SCALE MRNA]</scope>
    <source>
        <strain>FVB/N</strain>
        <tissue>Salivary gland</tissue>
    </source>
</reference>
<reference key="4">
    <citation type="submission" date="2007-04" db="UniProtKB">
        <authorList>
            <person name="Lubec G."/>
            <person name="Kang S.U."/>
        </authorList>
    </citation>
    <scope>PROTEIN SEQUENCE OF 8-27</scope>
    <scope>IDENTIFICATION BY MASS SPECTROMETRY</scope>
    <source>
        <strain>C57BL/6J</strain>
        <tissue>Brain</tissue>
    </source>
</reference>
<reference key="5">
    <citation type="journal article" date="2005" name="Science">
        <title>The transcriptional landscape of the mammalian genome.</title>
        <authorList>
            <person name="Carninci P."/>
            <person name="Kasukawa T."/>
            <person name="Katayama S."/>
            <person name="Gough J."/>
            <person name="Frith M.C."/>
            <person name="Maeda N."/>
            <person name="Oyama R."/>
            <person name="Ravasi T."/>
            <person name="Lenhard B."/>
            <person name="Wells C."/>
            <person name="Kodzius R."/>
            <person name="Shimokawa K."/>
            <person name="Bajic V.B."/>
            <person name="Brenner S.E."/>
            <person name="Batalov S."/>
            <person name="Forrest A.R."/>
            <person name="Zavolan M."/>
            <person name="Davis M.J."/>
            <person name="Wilming L.G."/>
            <person name="Aidinis V."/>
            <person name="Allen J.E."/>
            <person name="Ambesi-Impiombato A."/>
            <person name="Apweiler R."/>
            <person name="Aturaliya R.N."/>
            <person name="Bailey T.L."/>
            <person name="Bansal M."/>
            <person name="Baxter L."/>
            <person name="Beisel K.W."/>
            <person name="Bersano T."/>
            <person name="Bono H."/>
            <person name="Chalk A.M."/>
            <person name="Chiu K.P."/>
            <person name="Choudhary V."/>
            <person name="Christoffels A."/>
            <person name="Clutterbuck D.R."/>
            <person name="Crowe M.L."/>
            <person name="Dalla E."/>
            <person name="Dalrymple B.P."/>
            <person name="de Bono B."/>
            <person name="Della Gatta G."/>
            <person name="di Bernardo D."/>
            <person name="Down T."/>
            <person name="Engstrom P."/>
            <person name="Fagiolini M."/>
            <person name="Faulkner G."/>
            <person name="Fletcher C.F."/>
            <person name="Fukushima T."/>
            <person name="Furuno M."/>
            <person name="Futaki S."/>
            <person name="Gariboldi M."/>
            <person name="Georgii-Hemming P."/>
            <person name="Gingeras T.R."/>
            <person name="Gojobori T."/>
            <person name="Green R.E."/>
            <person name="Gustincich S."/>
            <person name="Harbers M."/>
            <person name="Hayashi Y."/>
            <person name="Hensch T.K."/>
            <person name="Hirokawa N."/>
            <person name="Hill D."/>
            <person name="Huminiecki L."/>
            <person name="Iacono M."/>
            <person name="Ikeo K."/>
            <person name="Iwama A."/>
            <person name="Ishikawa T."/>
            <person name="Jakt M."/>
            <person name="Kanapin A."/>
            <person name="Katoh M."/>
            <person name="Kawasawa Y."/>
            <person name="Kelso J."/>
            <person name="Kitamura H."/>
            <person name="Kitano H."/>
            <person name="Kollias G."/>
            <person name="Krishnan S.P."/>
            <person name="Kruger A."/>
            <person name="Kummerfeld S.K."/>
            <person name="Kurochkin I.V."/>
            <person name="Lareau L.F."/>
            <person name="Lazarevic D."/>
            <person name="Lipovich L."/>
            <person name="Liu J."/>
            <person name="Liuni S."/>
            <person name="McWilliam S."/>
            <person name="Madan Babu M."/>
            <person name="Madera M."/>
            <person name="Marchionni L."/>
            <person name="Matsuda H."/>
            <person name="Matsuzawa S."/>
            <person name="Miki H."/>
            <person name="Mignone F."/>
            <person name="Miyake S."/>
            <person name="Morris K."/>
            <person name="Mottagui-Tabar S."/>
            <person name="Mulder N."/>
            <person name="Nakano N."/>
            <person name="Nakauchi H."/>
            <person name="Ng P."/>
            <person name="Nilsson R."/>
            <person name="Nishiguchi S."/>
            <person name="Nishikawa S."/>
            <person name="Nori F."/>
            <person name="Ohara O."/>
            <person name="Okazaki Y."/>
            <person name="Orlando V."/>
            <person name="Pang K.C."/>
            <person name="Pavan W.J."/>
            <person name="Pavesi G."/>
            <person name="Pesole G."/>
            <person name="Petrovsky N."/>
            <person name="Piazza S."/>
            <person name="Reed J."/>
            <person name="Reid J.F."/>
            <person name="Ring B.Z."/>
            <person name="Ringwald M."/>
            <person name="Rost B."/>
            <person name="Ruan Y."/>
            <person name="Salzberg S.L."/>
            <person name="Sandelin A."/>
            <person name="Schneider C."/>
            <person name="Schoenbach C."/>
            <person name="Sekiguchi K."/>
            <person name="Semple C.A."/>
            <person name="Seno S."/>
            <person name="Sessa L."/>
            <person name="Sheng Y."/>
            <person name="Shibata Y."/>
            <person name="Shimada H."/>
            <person name="Shimada K."/>
            <person name="Silva D."/>
            <person name="Sinclair B."/>
            <person name="Sperling S."/>
            <person name="Stupka E."/>
            <person name="Sugiura K."/>
            <person name="Sultana R."/>
            <person name="Takenaka Y."/>
            <person name="Taki K."/>
            <person name="Tammoja K."/>
            <person name="Tan S.L."/>
            <person name="Tang S."/>
            <person name="Taylor M.S."/>
            <person name="Tegner J."/>
            <person name="Teichmann S.A."/>
            <person name="Ueda H.R."/>
            <person name="van Nimwegen E."/>
            <person name="Verardo R."/>
            <person name="Wei C.L."/>
            <person name="Yagi K."/>
            <person name="Yamanishi H."/>
            <person name="Zabarovsky E."/>
            <person name="Zhu S."/>
            <person name="Zimmer A."/>
            <person name="Hide W."/>
            <person name="Bult C."/>
            <person name="Grimmond S.M."/>
            <person name="Teasdale R.D."/>
            <person name="Liu E.T."/>
            <person name="Brusic V."/>
            <person name="Quackenbush J."/>
            <person name="Wahlestedt C."/>
            <person name="Mattick J.S."/>
            <person name="Hume D.A."/>
            <person name="Kai C."/>
            <person name="Sasaki D."/>
            <person name="Tomaru Y."/>
            <person name="Fukuda S."/>
            <person name="Kanamori-Katayama M."/>
            <person name="Suzuki M."/>
            <person name="Aoki J."/>
            <person name="Arakawa T."/>
            <person name="Iida J."/>
            <person name="Imamura K."/>
            <person name="Itoh M."/>
            <person name="Kato T."/>
            <person name="Kawaji H."/>
            <person name="Kawagashira N."/>
            <person name="Kawashima T."/>
            <person name="Kojima M."/>
            <person name="Kondo S."/>
            <person name="Konno H."/>
            <person name="Nakano K."/>
            <person name="Ninomiya N."/>
            <person name="Nishio T."/>
            <person name="Okada M."/>
            <person name="Plessy C."/>
            <person name="Shibata K."/>
            <person name="Shiraki T."/>
            <person name="Suzuki S."/>
            <person name="Tagami M."/>
            <person name="Waki K."/>
            <person name="Watahiki A."/>
            <person name="Okamura-Oho Y."/>
            <person name="Suzuki H."/>
            <person name="Kawai J."/>
            <person name="Hayashizaki Y."/>
        </authorList>
    </citation>
    <scope>NUCLEOTIDE SEQUENCE [LARGE SCALE MRNA] OF 160-196</scope>
    <source>
        <strain>C57BL/6J</strain>
        <tissue>Hippocampus</tissue>
    </source>
</reference>
<reference key="6">
    <citation type="journal article" date="2001" name="Mol. Cell. Biol.">
        <title>RhoB is dispensable for mouse development, but it modifies susceptibility to tumor formation as well as cell adhesion and growth factor signaling in transformed cells.</title>
        <authorList>
            <person name="Liu A.-X."/>
            <person name="Rane N."/>
            <person name="Liu J.-P."/>
            <person name="Prendergast G.C."/>
        </authorList>
    </citation>
    <scope>FUNCTION</scope>
</reference>
<reference key="7">
    <citation type="journal article" date="2001" name="Proc. Natl. Acad. Sci. U.S.A.">
        <title>RhoB is required to mediate apoptosis in neoplastically transformed cells after DNA damage.</title>
        <authorList>
            <person name="Liu A.-X."/>
            <person name="Cerniglia G.J."/>
            <person name="Bernhard E.J."/>
            <person name="Prendergast G.C."/>
        </authorList>
    </citation>
    <scope>FUNCTION</scope>
</reference>
<reference key="8">
    <citation type="journal article" date="2003" name="Genes Dev.">
        <title>RhoB controls Akt trafficking and stage-specific survival of endothelial cells during vascular development.</title>
        <authorList>
            <person name="Adini I."/>
            <person name="Rabinovitz I."/>
            <person name="Sun J.F."/>
            <person name="Prendergast G.C."/>
            <person name="Benjamin L.E."/>
        </authorList>
    </citation>
    <scope>FUNCTION</scope>
    <scope>SUBCELLULAR LOCATION</scope>
</reference>
<reference key="9">
    <citation type="journal article" date="1995" name="J. Biol. Chem.">
        <title>The ras-related small GTP-binding protein RhoB is immediate-early inducible by DNA damaging treatments.</title>
        <authorList>
            <person name="Fritz G."/>
            <person name="Kaina B."/>
            <person name="Aktories K."/>
        </authorList>
    </citation>
    <scope>INDUCTION</scope>
</reference>
<reference key="10">
    <citation type="journal article" date="1996" name="J. Biol. Chem.">
        <title>Rhotekin, a new putative target for Rho bearing homology to a serine/threonine kinase, PKN, and rhophilin in the rho-binding domain.</title>
        <authorList>
            <person name="Reid T."/>
            <person name="Furuyashiki T."/>
            <person name="Ishizaki T."/>
            <person name="Watanabe G."/>
            <person name="Watanabe N."/>
            <person name="Fujisawa K."/>
            <person name="Morii N."/>
            <person name="Madaule P."/>
            <person name="Narumiya S."/>
        </authorList>
    </citation>
    <scope>INTERACTION WITH RTKN</scope>
</reference>
<reference key="11">
    <citation type="journal article" date="2003" name="Oncogene">
        <title>Mitogen-responsive expression of RhoB is regulated by RNA stability.</title>
        <authorList>
            <person name="Malcolm T."/>
            <person name="Ettehadieh E."/>
            <person name="Sadowski I."/>
        </authorList>
    </citation>
    <scope>INDUCTION</scope>
</reference>
<reference key="12">
    <citation type="journal article" date="2008" name="J. Proteome Res.">
        <title>Large-scale identification and evolution indexing of tyrosine phosphorylation sites from murine brain.</title>
        <authorList>
            <person name="Ballif B.A."/>
            <person name="Carey G.R."/>
            <person name="Sunyaev S.R."/>
            <person name="Gygi S.P."/>
        </authorList>
    </citation>
    <scope>PHOSPHORYLATION [LARGE SCALE ANALYSIS] AT TYR-154</scope>
    <scope>IDENTIFICATION BY MASS SPECTROMETRY [LARGE SCALE ANALYSIS]</scope>
    <source>
        <tissue>Brain</tissue>
    </source>
</reference>
<reference key="13">
    <citation type="journal article" date="2010" name="Cell">
        <title>A tissue-specific atlas of mouse protein phosphorylation and expression.</title>
        <authorList>
            <person name="Huttlin E.L."/>
            <person name="Jedrychowski M.P."/>
            <person name="Elias J.E."/>
            <person name="Goswami T."/>
            <person name="Rad R."/>
            <person name="Beausoleil S.A."/>
            <person name="Villen J."/>
            <person name="Haas W."/>
            <person name="Sowa M.E."/>
            <person name="Gygi S.P."/>
        </authorList>
    </citation>
    <scope>IDENTIFICATION BY MASS SPECTROMETRY [LARGE SCALE ANALYSIS]</scope>
    <source>
        <tissue>Brain</tissue>
        <tissue>Heart</tissue>
        <tissue>Kidney</tissue>
        <tissue>Lung</tissue>
        <tissue>Spleen</tissue>
        <tissue>Testis</tissue>
    </source>
</reference>
<keyword id="KW-0037">Angiogenesis</keyword>
<keyword id="KW-0053">Apoptosis</keyword>
<keyword id="KW-0130">Cell adhesion</keyword>
<keyword id="KW-1003">Cell membrane</keyword>
<keyword id="KW-0217">Developmental protein</keyword>
<keyword id="KW-0221">Differentiation</keyword>
<keyword id="KW-0903">Direct protein sequencing</keyword>
<keyword id="KW-0967">Endosome</keyword>
<keyword id="KW-0342">GTP-binding</keyword>
<keyword id="KW-0449">Lipoprotein</keyword>
<keyword id="KW-0472">Membrane</keyword>
<keyword id="KW-0488">Methylation</keyword>
<keyword id="KW-0547">Nucleotide-binding</keyword>
<keyword id="KW-0539">Nucleus</keyword>
<keyword id="KW-0564">Palmitate</keyword>
<keyword id="KW-0597">Phosphoprotein</keyword>
<keyword id="KW-0636">Prenylation</keyword>
<keyword id="KW-0653">Protein transport</keyword>
<keyword id="KW-1185">Reference proteome</keyword>
<keyword id="KW-0813">Transport</keyword>
<keyword id="KW-0043">Tumor suppressor</keyword>
<protein>
    <recommendedName>
        <fullName>Rho-related GTP-binding protein RhoB</fullName>
    </recommendedName>
</protein>
<proteinExistence type="evidence at protein level"/>
<name>RHOB_MOUSE</name>
<gene>
    <name type="primary">Rhob</name>
    <name type="synonym">Arhb</name>
</gene>
<organism>
    <name type="scientific">Mus musculus</name>
    <name type="common">Mouse</name>
    <dbReference type="NCBI Taxonomy" id="10090"/>
    <lineage>
        <taxon>Eukaryota</taxon>
        <taxon>Metazoa</taxon>
        <taxon>Chordata</taxon>
        <taxon>Craniata</taxon>
        <taxon>Vertebrata</taxon>
        <taxon>Euteleostomi</taxon>
        <taxon>Mammalia</taxon>
        <taxon>Eutheria</taxon>
        <taxon>Euarchontoglires</taxon>
        <taxon>Glires</taxon>
        <taxon>Rodentia</taxon>
        <taxon>Myomorpha</taxon>
        <taxon>Muroidea</taxon>
        <taxon>Muridae</taxon>
        <taxon>Murinae</taxon>
        <taxon>Mus</taxon>
        <taxon>Mus</taxon>
    </lineage>
</organism>
<feature type="chain" id="PRO_0000030419" description="Rho-related GTP-binding protein RhoB">
    <location>
        <begin position="1"/>
        <end position="193"/>
    </location>
</feature>
<feature type="propeptide" id="PRO_0000030420" description="Removed in mature form" evidence="1">
    <location>
        <begin position="194"/>
        <end position="196"/>
    </location>
</feature>
<feature type="short sequence motif" description="Effector region" evidence="4">
    <location>
        <begin position="34"/>
        <end position="42"/>
    </location>
</feature>
<feature type="binding site" evidence="1">
    <location>
        <begin position="12"/>
        <end position="19"/>
    </location>
    <ligand>
        <name>GTP</name>
        <dbReference type="ChEBI" id="CHEBI:37565"/>
    </ligand>
</feature>
<feature type="binding site" evidence="1">
    <location>
        <begin position="59"/>
        <end position="63"/>
    </location>
    <ligand>
        <name>GTP</name>
        <dbReference type="ChEBI" id="CHEBI:37565"/>
    </ligand>
</feature>
<feature type="binding site" evidence="1">
    <location>
        <begin position="117"/>
        <end position="120"/>
    </location>
    <ligand>
        <name>GTP</name>
        <dbReference type="ChEBI" id="CHEBI:37565"/>
    </ligand>
</feature>
<feature type="modified residue" description="Phosphotyrosine" evidence="12">
    <location>
        <position position="154"/>
    </location>
</feature>
<feature type="modified residue" description="Cysteine methyl ester" evidence="1">
    <location>
        <position position="193"/>
    </location>
</feature>
<feature type="lipid moiety-binding region" description="S-palmitoyl cysteine" evidence="1">
    <location>
        <position position="189"/>
    </location>
</feature>
<feature type="lipid moiety-binding region" description="S-palmitoyl cysteine" evidence="1">
    <location>
        <position position="192"/>
    </location>
</feature>
<feature type="lipid moiety-binding region" description="S-farnesyl cysteine; in plasma membrane form" evidence="1">
    <location>
        <position position="193"/>
    </location>
</feature>
<feature type="lipid moiety-binding region" description="S-geranylgeranyl cysteine; in endosomal form" evidence="1">
    <location>
        <position position="193"/>
    </location>
</feature>
<comment type="function">
    <text evidence="5 6 8">Mediates apoptosis in neoplastically transformed cells after DNA damage. Not essential for development but affects cell adhesion and growth factor signaling in transformed cells. Plays a negative role in tumorigenesis as deletion causes tumor formation. Involved in intracellular protein trafficking of a number of proteins. Targets PKN1 to endosomes and is involved in trafficking of the EGF receptor from late endosomes to lysosomes. Also required for stability and nuclear trafficking of AKT1/AKT which promotes endothelial cell survival during vascular development. Serves as a microtubule-dependent signal that is required for the myosin contractile ring formation during cell cycle cytokinesis. Required for genotoxic stress-induced cell death in breast cancer cells.</text>
</comment>
<comment type="subunit">
    <text evidence="2 3 10">Binds ROCK1 and ROCK2. Also binds PKN1/PRK1. Interacts with ARGGEF3 (By similarity). Interacts with RTKN (PubMed:8662891). Interacts with AKAP13. Interacts with RIPOR1 (By similarity).</text>
</comment>
<comment type="subcellular location">
    <subcellularLocation>
        <location evidence="8">Late endosome membrane</location>
        <topology evidence="8">Lipid-anchor</topology>
    </subcellularLocation>
    <subcellularLocation>
        <location evidence="8">Cell membrane</location>
        <topology evidence="8">Lipid-anchor</topology>
    </subcellularLocation>
    <subcellularLocation>
        <location evidence="8">Nucleus</location>
    </subcellularLocation>
    <subcellularLocation>
        <location evidence="1">Cleavage furrow</location>
    </subcellularLocation>
    <text evidence="1">Translocates to the equatorial region before furrow formation in a ECT2-dependent manner (By similarity). Late endosomal membrane (geranylgeranylated form). Plasma membrane (farnesylated form). Also detected at the nuclear margin and in the nucleus.</text>
</comment>
<comment type="induction">
    <text evidence="7 9">By UV irradiation, N-methyl-N-nitrosourea, cisplatin, cyclohexamide and serum stimulation.</text>
</comment>
<comment type="PTM">
    <text evidence="1">Prenylation specifies the subcellular location of RHOB. The farnesylated form is localized to the plasma membrane while the geranylgeranylated form is localized to the endosome (By similarity).</text>
</comment>
<comment type="similarity">
    <text evidence="11">Belongs to the small GTPase superfamily. Rho family.</text>
</comment>
<accession>P62746</accession>
<accession>P01121</accession>
<accession>Q9CUV7</accession>
<sequence>MAAIRKKLVVVGDGACGKTCLLIVFSKDEFPEVYVPTVFENYVADIEVDGKQVELALWDTAGQEDYDRLRPLSYPDTDVILMCFSVDSPDSLENIPEKWVPEVKHFCPNVPIILVANKKDLRSDEHVRTELARMKQEPVRTDDGRAMAVRIQAYDYLECSAKTKEGVREVFETATRAALQKRYGSQNGCINCCKVL</sequence>
<evidence type="ECO:0000250" key="1"/>
<evidence type="ECO:0000250" key="2">
    <source>
        <dbReference type="UniProtKB" id="P62745"/>
    </source>
</evidence>
<evidence type="ECO:0000250" key="3">
    <source>
        <dbReference type="UniProtKB" id="P62747"/>
    </source>
</evidence>
<evidence type="ECO:0000255" key="4"/>
<evidence type="ECO:0000269" key="5">
    <source>
    </source>
</evidence>
<evidence type="ECO:0000269" key="6">
    <source>
    </source>
</evidence>
<evidence type="ECO:0000269" key="7">
    <source>
    </source>
</evidence>
<evidence type="ECO:0000269" key="8">
    <source>
    </source>
</evidence>
<evidence type="ECO:0000269" key="9">
    <source>
    </source>
</evidence>
<evidence type="ECO:0000269" key="10">
    <source>
    </source>
</evidence>
<evidence type="ECO:0000305" key="11"/>
<evidence type="ECO:0007744" key="12">
    <source>
    </source>
</evidence>
<dbReference type="EMBL" id="X99963">
    <property type="protein sequence ID" value="CAA68228.1"/>
    <property type="molecule type" value="Genomic_DNA"/>
</dbReference>
<dbReference type="EMBL" id="AF481943">
    <property type="protein sequence ID" value="AAL89687.1"/>
    <property type="molecule type" value="mRNA"/>
</dbReference>
<dbReference type="EMBL" id="BC018275">
    <property type="protein sequence ID" value="AAH18275.1"/>
    <property type="molecule type" value="mRNA"/>
</dbReference>
<dbReference type="EMBL" id="AK013784">
    <property type="protein sequence ID" value="BAB28993.1"/>
    <property type="molecule type" value="mRNA"/>
</dbReference>
<dbReference type="CCDS" id="CCDS25799.1"/>
<dbReference type="PIR" id="JC5075">
    <property type="entry name" value="JC5075"/>
</dbReference>
<dbReference type="RefSeq" id="NP_031509.1">
    <property type="nucleotide sequence ID" value="NM_007483.3"/>
</dbReference>
<dbReference type="SMR" id="P62746"/>
<dbReference type="BioGRID" id="198196">
    <property type="interactions" value="12"/>
</dbReference>
<dbReference type="FunCoup" id="P62746">
    <property type="interactions" value="926"/>
</dbReference>
<dbReference type="IntAct" id="P62746">
    <property type="interactions" value="4"/>
</dbReference>
<dbReference type="MINT" id="P62746"/>
<dbReference type="STRING" id="10090.ENSMUSP00000067013"/>
<dbReference type="iPTMnet" id="P62746"/>
<dbReference type="PhosphoSitePlus" id="P62746"/>
<dbReference type="SwissPalm" id="P62746"/>
<dbReference type="jPOST" id="P62746"/>
<dbReference type="PaxDb" id="10090-ENSMUSP00000067013"/>
<dbReference type="PeptideAtlas" id="P62746"/>
<dbReference type="ProteomicsDB" id="254975"/>
<dbReference type="Pumba" id="P62746"/>
<dbReference type="Antibodypedia" id="3879">
    <property type="antibodies" value="242 antibodies from 34 providers"/>
</dbReference>
<dbReference type="DNASU" id="11852"/>
<dbReference type="Ensembl" id="ENSMUST00000067384.6">
    <property type="protein sequence ID" value="ENSMUSP00000067013.5"/>
    <property type="gene ID" value="ENSMUSG00000054364.6"/>
</dbReference>
<dbReference type="GeneID" id="11852"/>
<dbReference type="KEGG" id="mmu:11852"/>
<dbReference type="UCSC" id="uc007mzp.1">
    <property type="organism name" value="mouse"/>
</dbReference>
<dbReference type="AGR" id="MGI:107949"/>
<dbReference type="CTD" id="388"/>
<dbReference type="MGI" id="MGI:107949">
    <property type="gene designation" value="Rhob"/>
</dbReference>
<dbReference type="VEuPathDB" id="HostDB:ENSMUSG00000054364"/>
<dbReference type="eggNOG" id="KOG0393">
    <property type="taxonomic scope" value="Eukaryota"/>
</dbReference>
<dbReference type="GeneTree" id="ENSGT00950000182945"/>
<dbReference type="HOGENOM" id="CLU_041217_21_2_1"/>
<dbReference type="InParanoid" id="P62746"/>
<dbReference type="OMA" id="ENVYTKW"/>
<dbReference type="OrthoDB" id="8830751at2759"/>
<dbReference type="PhylomeDB" id="P62746"/>
<dbReference type="TreeFam" id="TF300837"/>
<dbReference type="BRENDA" id="3.6.5.2">
    <property type="organism ID" value="3474"/>
</dbReference>
<dbReference type="Reactome" id="R-MMU-114604">
    <property type="pathway name" value="GPVI-mediated activation cascade"/>
</dbReference>
<dbReference type="Reactome" id="R-MMU-416482">
    <property type="pathway name" value="G alpha (12/13) signalling events"/>
</dbReference>
<dbReference type="Reactome" id="R-MMU-416572">
    <property type="pathway name" value="Sema4D induced cell migration and growth-cone collapse"/>
</dbReference>
<dbReference type="Reactome" id="R-MMU-5625740">
    <property type="pathway name" value="RHO GTPases activate PKNs"/>
</dbReference>
<dbReference type="Reactome" id="R-MMU-5625900">
    <property type="pathway name" value="RHO GTPases activate CIT"/>
</dbReference>
<dbReference type="Reactome" id="R-MMU-5627117">
    <property type="pathway name" value="RHO GTPases Activate ROCKs"/>
</dbReference>
<dbReference type="Reactome" id="R-MMU-5663220">
    <property type="pathway name" value="RHO GTPases Activate Formins"/>
</dbReference>
<dbReference type="Reactome" id="R-MMU-9013026">
    <property type="pathway name" value="RHOB GTPase cycle"/>
</dbReference>
<dbReference type="BioGRID-ORCS" id="11852">
    <property type="hits" value="1 hit in 75 CRISPR screens"/>
</dbReference>
<dbReference type="CD-CODE" id="CE726F99">
    <property type="entry name" value="Postsynaptic density"/>
</dbReference>
<dbReference type="ChiTaRS" id="Rhob">
    <property type="organism name" value="mouse"/>
</dbReference>
<dbReference type="PRO" id="PR:P62746"/>
<dbReference type="Proteomes" id="UP000000589">
    <property type="component" value="Chromosome 12"/>
</dbReference>
<dbReference type="RNAct" id="P62746">
    <property type="molecule type" value="protein"/>
</dbReference>
<dbReference type="Bgee" id="ENSMUSG00000054364">
    <property type="expression patterns" value="Expressed in molar tooth and 284 other cell types or tissues"/>
</dbReference>
<dbReference type="ExpressionAtlas" id="P62746">
    <property type="expression patterns" value="baseline and differential"/>
</dbReference>
<dbReference type="GO" id="GO:0032154">
    <property type="term" value="C:cleavage furrow"/>
    <property type="evidence" value="ECO:0000250"/>
    <property type="project" value="UniProtKB"/>
</dbReference>
<dbReference type="GO" id="GO:0005829">
    <property type="term" value="C:cytosol"/>
    <property type="evidence" value="ECO:0007669"/>
    <property type="project" value="Ensembl"/>
</dbReference>
<dbReference type="GO" id="GO:0005769">
    <property type="term" value="C:early endosome"/>
    <property type="evidence" value="ECO:0000314"/>
    <property type="project" value="MGI"/>
</dbReference>
<dbReference type="GO" id="GO:0010008">
    <property type="term" value="C:endosome membrane"/>
    <property type="evidence" value="ECO:0000250"/>
    <property type="project" value="UniProtKB"/>
</dbReference>
<dbReference type="GO" id="GO:0005770">
    <property type="term" value="C:late endosome"/>
    <property type="evidence" value="ECO:0000314"/>
    <property type="project" value="MGI"/>
</dbReference>
<dbReference type="GO" id="GO:0031902">
    <property type="term" value="C:late endosome membrane"/>
    <property type="evidence" value="ECO:0007669"/>
    <property type="project" value="UniProtKB-SubCell"/>
</dbReference>
<dbReference type="GO" id="GO:0016020">
    <property type="term" value="C:membrane"/>
    <property type="evidence" value="ECO:0000314"/>
    <property type="project" value="MGI"/>
</dbReference>
<dbReference type="GO" id="GO:0005634">
    <property type="term" value="C:nucleus"/>
    <property type="evidence" value="ECO:0000314"/>
    <property type="project" value="UniProtKB"/>
</dbReference>
<dbReference type="GO" id="GO:0005886">
    <property type="term" value="C:plasma membrane"/>
    <property type="evidence" value="ECO:0000314"/>
    <property type="project" value="MGI"/>
</dbReference>
<dbReference type="GO" id="GO:0098685">
    <property type="term" value="C:Schaffer collateral - CA1 synapse"/>
    <property type="evidence" value="ECO:0000314"/>
    <property type="project" value="SynGO"/>
</dbReference>
<dbReference type="GO" id="GO:0019003">
    <property type="term" value="F:GDP binding"/>
    <property type="evidence" value="ECO:0000314"/>
    <property type="project" value="MGI"/>
</dbReference>
<dbReference type="GO" id="GO:0005525">
    <property type="term" value="F:GTP binding"/>
    <property type="evidence" value="ECO:0000304"/>
    <property type="project" value="UniProtKB"/>
</dbReference>
<dbReference type="GO" id="GO:0003924">
    <property type="term" value="F:GTPase activity"/>
    <property type="evidence" value="ECO:0007669"/>
    <property type="project" value="InterPro"/>
</dbReference>
<dbReference type="GO" id="GO:0001525">
    <property type="term" value="P:angiogenesis"/>
    <property type="evidence" value="ECO:0007669"/>
    <property type="project" value="UniProtKB-KW"/>
</dbReference>
<dbReference type="GO" id="GO:0006915">
    <property type="term" value="P:apoptotic process"/>
    <property type="evidence" value="ECO:0007669"/>
    <property type="project" value="UniProtKB-KW"/>
</dbReference>
<dbReference type="GO" id="GO:0007155">
    <property type="term" value="P:cell adhesion"/>
    <property type="evidence" value="ECO:0000314"/>
    <property type="project" value="UniProtKB"/>
</dbReference>
<dbReference type="GO" id="GO:0030154">
    <property type="term" value="P:cell differentiation"/>
    <property type="evidence" value="ECO:0007669"/>
    <property type="project" value="UniProtKB-KW"/>
</dbReference>
<dbReference type="GO" id="GO:0070301">
    <property type="term" value="P:cellular response to hydrogen peroxide"/>
    <property type="evidence" value="ECO:0000250"/>
    <property type="project" value="UniProtKB"/>
</dbReference>
<dbReference type="GO" id="GO:0071479">
    <property type="term" value="P:cellular response to ionizing radiation"/>
    <property type="evidence" value="ECO:0000250"/>
    <property type="project" value="UniProtKB"/>
</dbReference>
<dbReference type="GO" id="GO:0008333">
    <property type="term" value="P:endosome to lysosome transport"/>
    <property type="evidence" value="ECO:0000250"/>
    <property type="project" value="UniProtKB"/>
</dbReference>
<dbReference type="GO" id="GO:0061154">
    <property type="term" value="P:endothelial tube morphogenesis"/>
    <property type="evidence" value="ECO:0007669"/>
    <property type="project" value="Ensembl"/>
</dbReference>
<dbReference type="GO" id="GO:0006886">
    <property type="term" value="P:intracellular protein transport"/>
    <property type="evidence" value="ECO:0000315"/>
    <property type="project" value="MGI"/>
</dbReference>
<dbReference type="GO" id="GO:0000281">
    <property type="term" value="P:mitotic cytokinesis"/>
    <property type="evidence" value="ECO:0000250"/>
    <property type="project" value="UniProtKB"/>
</dbReference>
<dbReference type="GO" id="GO:0045786">
    <property type="term" value="P:negative regulation of cell cycle"/>
    <property type="evidence" value="ECO:0000315"/>
    <property type="project" value="UniProtKB"/>
</dbReference>
<dbReference type="GO" id="GO:0030336">
    <property type="term" value="P:negative regulation of cell migration"/>
    <property type="evidence" value="ECO:0007669"/>
    <property type="project" value="Ensembl"/>
</dbReference>
<dbReference type="GO" id="GO:0045766">
    <property type="term" value="P:positive regulation of angiogenesis"/>
    <property type="evidence" value="ECO:0000315"/>
    <property type="project" value="UniProtKB"/>
</dbReference>
<dbReference type="GO" id="GO:0043065">
    <property type="term" value="P:positive regulation of apoptotic process"/>
    <property type="evidence" value="ECO:0000314"/>
    <property type="project" value="UniProtKB"/>
</dbReference>
<dbReference type="GO" id="GO:0010595">
    <property type="term" value="P:positive regulation of endothelial cell migration"/>
    <property type="evidence" value="ECO:0007669"/>
    <property type="project" value="Ensembl"/>
</dbReference>
<dbReference type="GO" id="GO:0099159">
    <property type="term" value="P:regulation of modification of postsynaptic structure"/>
    <property type="evidence" value="ECO:0000314"/>
    <property type="project" value="SynGO"/>
</dbReference>
<dbReference type="GO" id="GO:0007264">
    <property type="term" value="P:small GTPase-mediated signal transduction"/>
    <property type="evidence" value="ECO:0007669"/>
    <property type="project" value="InterPro"/>
</dbReference>
<dbReference type="CDD" id="cd01870">
    <property type="entry name" value="RhoA_like"/>
    <property type="match status" value="1"/>
</dbReference>
<dbReference type="FunFam" id="3.40.50.300:FF:000095">
    <property type="entry name" value="Rho-related GTP-binding protein RhoC"/>
    <property type="match status" value="1"/>
</dbReference>
<dbReference type="Gene3D" id="3.40.50.300">
    <property type="entry name" value="P-loop containing nucleotide triphosphate hydrolases"/>
    <property type="match status" value="1"/>
</dbReference>
<dbReference type="InterPro" id="IPR027417">
    <property type="entry name" value="P-loop_NTPase"/>
</dbReference>
<dbReference type="InterPro" id="IPR005225">
    <property type="entry name" value="Small_GTP-bd"/>
</dbReference>
<dbReference type="InterPro" id="IPR001806">
    <property type="entry name" value="Small_GTPase"/>
</dbReference>
<dbReference type="InterPro" id="IPR003578">
    <property type="entry name" value="Small_GTPase_Rho"/>
</dbReference>
<dbReference type="NCBIfam" id="TIGR00231">
    <property type="entry name" value="small_GTP"/>
    <property type="match status" value="1"/>
</dbReference>
<dbReference type="PANTHER" id="PTHR24072">
    <property type="entry name" value="RHO FAMILY GTPASE"/>
    <property type="match status" value="1"/>
</dbReference>
<dbReference type="Pfam" id="PF00071">
    <property type="entry name" value="Ras"/>
    <property type="match status" value="1"/>
</dbReference>
<dbReference type="PRINTS" id="PR00449">
    <property type="entry name" value="RASTRNSFRMNG"/>
</dbReference>
<dbReference type="SMART" id="SM00175">
    <property type="entry name" value="RAB"/>
    <property type="match status" value="1"/>
</dbReference>
<dbReference type="SMART" id="SM00173">
    <property type="entry name" value="RAS"/>
    <property type="match status" value="1"/>
</dbReference>
<dbReference type="SMART" id="SM00174">
    <property type="entry name" value="RHO"/>
    <property type="match status" value="1"/>
</dbReference>
<dbReference type="SUPFAM" id="SSF52540">
    <property type="entry name" value="P-loop containing nucleoside triphosphate hydrolases"/>
    <property type="match status" value="1"/>
</dbReference>
<dbReference type="PROSITE" id="PS51420">
    <property type="entry name" value="RHO"/>
    <property type="match status" value="1"/>
</dbReference>